<accession>Q6AXW7</accession>
<comment type="function">
    <text evidence="2">Can dephosphorylate single and diphosphorylated synthetic MAPK peptides, with preference for the phosphotyrosine and diphosphorylated forms over phosphothreonine. In vitro, dephosphorylates p-nitrophenyl phosphate (pNPP).</text>
</comment>
<comment type="catalytic activity">
    <reaction evidence="5">
        <text>O-phospho-L-tyrosyl-[protein] + H2O = L-tyrosyl-[protein] + phosphate</text>
        <dbReference type="Rhea" id="RHEA:10684"/>
        <dbReference type="Rhea" id="RHEA-COMP:10136"/>
        <dbReference type="Rhea" id="RHEA-COMP:20101"/>
        <dbReference type="ChEBI" id="CHEBI:15377"/>
        <dbReference type="ChEBI" id="CHEBI:43474"/>
        <dbReference type="ChEBI" id="CHEBI:46858"/>
        <dbReference type="ChEBI" id="CHEBI:61978"/>
        <dbReference type="EC" id="3.1.3.48"/>
    </reaction>
</comment>
<comment type="catalytic activity">
    <reaction evidence="2">
        <text>O-phospho-L-seryl-[protein] + H2O = L-seryl-[protein] + phosphate</text>
        <dbReference type="Rhea" id="RHEA:20629"/>
        <dbReference type="Rhea" id="RHEA-COMP:9863"/>
        <dbReference type="Rhea" id="RHEA-COMP:11604"/>
        <dbReference type="ChEBI" id="CHEBI:15377"/>
        <dbReference type="ChEBI" id="CHEBI:29999"/>
        <dbReference type="ChEBI" id="CHEBI:43474"/>
        <dbReference type="ChEBI" id="CHEBI:83421"/>
        <dbReference type="EC" id="3.1.3.16"/>
    </reaction>
</comment>
<comment type="catalytic activity">
    <reaction evidence="2">
        <text>O-phospho-L-threonyl-[protein] + H2O = L-threonyl-[protein] + phosphate</text>
        <dbReference type="Rhea" id="RHEA:47004"/>
        <dbReference type="Rhea" id="RHEA-COMP:11060"/>
        <dbReference type="Rhea" id="RHEA-COMP:11605"/>
        <dbReference type="ChEBI" id="CHEBI:15377"/>
        <dbReference type="ChEBI" id="CHEBI:30013"/>
        <dbReference type="ChEBI" id="CHEBI:43474"/>
        <dbReference type="ChEBI" id="CHEBI:61977"/>
        <dbReference type="EC" id="3.1.3.16"/>
    </reaction>
</comment>
<comment type="subcellular location">
    <subcellularLocation>
        <location evidence="3">Cytoplasm</location>
    </subcellularLocation>
    <subcellularLocation>
        <location evidence="2">Nucleus</location>
    </subcellularLocation>
    <subcellularLocation>
        <location evidence="6">Mitochondrion inner membrane</location>
        <topology evidence="6">Peripheral membrane protein</topology>
        <orientation evidence="6">Intermembrane side</orientation>
    </subcellularLocation>
    <text evidence="3">Translocates to cytoplasm in response to apoptotic stimuli such as staurosporine treatment.</text>
</comment>
<comment type="similarity">
    <text evidence="7">Belongs to the protein-tyrosine phosphatase family. Non-receptor class dual specificity subfamily.</text>
</comment>
<reference key="1">
    <citation type="journal article" date="2004" name="Genome Res.">
        <title>The status, quality, and expansion of the NIH full-length cDNA project: the Mammalian Gene Collection (MGC).</title>
        <authorList>
            <consortium name="The MGC Project Team"/>
        </authorList>
    </citation>
    <scope>NUCLEOTIDE SEQUENCE [LARGE SCALE MRNA]</scope>
    <source>
        <tissue>Testis</tissue>
    </source>
</reference>
<reference key="2">
    <citation type="journal article" date="2008" name="J. Biol. Chem.">
        <title>Dual specificity phosphatases 18 and 21 target to opposing sides of the mitochondrial inner membrane.</title>
        <authorList>
            <person name="Rardin M.J."/>
            <person name="Wiley S.E."/>
            <person name="Murphy A.N."/>
            <person name="Pagliarini D.J."/>
            <person name="Dixon J.E."/>
        </authorList>
    </citation>
    <scope>SUBCELLULAR LOCATION</scope>
</reference>
<feature type="chain" id="PRO_0000094831" description="Dual specificity protein phosphatase 18">
    <location>
        <begin position="1"/>
        <end position="204"/>
    </location>
</feature>
<feature type="domain" description="Tyrosine-protein phosphatase" evidence="4">
    <location>
        <begin position="19"/>
        <end position="160"/>
    </location>
</feature>
<feature type="region of interest" description="Sufficient for mitochondrial localization" evidence="1">
    <location>
        <begin position="95"/>
        <end position="141"/>
    </location>
</feature>
<feature type="active site" description="Phosphocysteine intermediate" evidence="4">
    <location>
        <position position="104"/>
    </location>
</feature>
<protein>
    <recommendedName>
        <fullName>Dual specificity protein phosphatase 18</fullName>
        <ecNumber evidence="2">3.1.3.16</ecNumber>
        <ecNumber evidence="2">3.1.3.48</ecNumber>
    </recommendedName>
</protein>
<organism>
    <name type="scientific">Rattus norvegicus</name>
    <name type="common">Rat</name>
    <dbReference type="NCBI Taxonomy" id="10116"/>
    <lineage>
        <taxon>Eukaryota</taxon>
        <taxon>Metazoa</taxon>
        <taxon>Chordata</taxon>
        <taxon>Craniata</taxon>
        <taxon>Vertebrata</taxon>
        <taxon>Euteleostomi</taxon>
        <taxon>Mammalia</taxon>
        <taxon>Eutheria</taxon>
        <taxon>Euarchontoglires</taxon>
        <taxon>Glires</taxon>
        <taxon>Rodentia</taxon>
        <taxon>Myomorpha</taxon>
        <taxon>Muroidea</taxon>
        <taxon>Muridae</taxon>
        <taxon>Murinae</taxon>
        <taxon>Rattus</taxon>
    </lineage>
</organism>
<keyword id="KW-0963">Cytoplasm</keyword>
<keyword id="KW-0378">Hydrolase</keyword>
<keyword id="KW-0472">Membrane</keyword>
<keyword id="KW-0496">Mitochondrion</keyword>
<keyword id="KW-0999">Mitochondrion inner membrane</keyword>
<keyword id="KW-0539">Nucleus</keyword>
<keyword id="KW-0904">Protein phosphatase</keyword>
<keyword id="KW-1185">Reference proteome</keyword>
<dbReference type="EC" id="3.1.3.16" evidence="2"/>
<dbReference type="EC" id="3.1.3.48" evidence="2"/>
<dbReference type="EMBL" id="BC079285">
    <property type="protein sequence ID" value="AAH79285.1"/>
    <property type="molecule type" value="mRNA"/>
</dbReference>
<dbReference type="RefSeq" id="NP_001013146.2">
    <property type="nucleotide sequence ID" value="NM_001013128.2"/>
</dbReference>
<dbReference type="SMR" id="Q6AXW7"/>
<dbReference type="FunCoup" id="Q6AXW7">
    <property type="interactions" value="391"/>
</dbReference>
<dbReference type="STRING" id="10116.ENSRNOP00000005516"/>
<dbReference type="PhosphoSitePlus" id="Q6AXW7"/>
<dbReference type="PaxDb" id="10116-ENSRNOP00000005516"/>
<dbReference type="GeneID" id="305477"/>
<dbReference type="KEGG" id="rno:305477"/>
<dbReference type="UCSC" id="RGD:1306929">
    <property type="organism name" value="rat"/>
</dbReference>
<dbReference type="AGR" id="RGD:1306929"/>
<dbReference type="CTD" id="150290"/>
<dbReference type="RGD" id="1306929">
    <property type="gene designation" value="Dusp18"/>
</dbReference>
<dbReference type="eggNOG" id="KOG1718">
    <property type="taxonomic scope" value="Eukaryota"/>
</dbReference>
<dbReference type="InParanoid" id="Q6AXW7"/>
<dbReference type="OrthoDB" id="285418at2759"/>
<dbReference type="PhylomeDB" id="Q6AXW7"/>
<dbReference type="PRO" id="PR:Q6AXW7"/>
<dbReference type="Proteomes" id="UP000002494">
    <property type="component" value="Unplaced"/>
</dbReference>
<dbReference type="GO" id="GO:0005737">
    <property type="term" value="C:cytoplasm"/>
    <property type="evidence" value="ECO:0000266"/>
    <property type="project" value="RGD"/>
</dbReference>
<dbReference type="GO" id="GO:0005743">
    <property type="term" value="C:mitochondrial inner membrane"/>
    <property type="evidence" value="ECO:0007669"/>
    <property type="project" value="UniProtKB-SubCell"/>
</dbReference>
<dbReference type="GO" id="GO:0005634">
    <property type="term" value="C:nucleus"/>
    <property type="evidence" value="ECO:0000250"/>
    <property type="project" value="UniProtKB"/>
</dbReference>
<dbReference type="GO" id="GO:0017017">
    <property type="term" value="F:MAP kinase tyrosine/serine/threonine phosphatase activity"/>
    <property type="evidence" value="ECO:0007669"/>
    <property type="project" value="InterPro"/>
</dbReference>
<dbReference type="GO" id="GO:0016791">
    <property type="term" value="F:phosphatase activity"/>
    <property type="evidence" value="ECO:0000250"/>
    <property type="project" value="UniProtKB"/>
</dbReference>
<dbReference type="GO" id="GO:0004722">
    <property type="term" value="F:protein serine/threonine phosphatase activity"/>
    <property type="evidence" value="ECO:0007669"/>
    <property type="project" value="UniProtKB-EC"/>
</dbReference>
<dbReference type="GO" id="GO:0004725">
    <property type="term" value="F:protein tyrosine phosphatase activity"/>
    <property type="evidence" value="ECO:0000266"/>
    <property type="project" value="RGD"/>
</dbReference>
<dbReference type="GO" id="GO:0008138">
    <property type="term" value="F:protein tyrosine/serine/threonine phosphatase activity"/>
    <property type="evidence" value="ECO:0000250"/>
    <property type="project" value="UniProtKB"/>
</dbReference>
<dbReference type="GO" id="GO:0016311">
    <property type="term" value="P:dephosphorylation"/>
    <property type="evidence" value="ECO:0000250"/>
    <property type="project" value="UniProtKB"/>
</dbReference>
<dbReference type="GO" id="GO:0035970">
    <property type="term" value="P:peptidyl-threonine dephosphorylation"/>
    <property type="evidence" value="ECO:0000250"/>
    <property type="project" value="UniProtKB"/>
</dbReference>
<dbReference type="GO" id="GO:0035335">
    <property type="term" value="P:peptidyl-tyrosine dephosphorylation"/>
    <property type="evidence" value="ECO:0000250"/>
    <property type="project" value="UniProtKB"/>
</dbReference>
<dbReference type="CDD" id="cd14573">
    <property type="entry name" value="DUSP18_21"/>
    <property type="match status" value="1"/>
</dbReference>
<dbReference type="FunFam" id="3.90.190.10:FF:000049">
    <property type="entry name" value="Dual specificity protein phosphatase 14"/>
    <property type="match status" value="1"/>
</dbReference>
<dbReference type="Gene3D" id="3.90.190.10">
    <property type="entry name" value="Protein tyrosine phosphatase superfamily"/>
    <property type="match status" value="1"/>
</dbReference>
<dbReference type="InterPro" id="IPR020420">
    <property type="entry name" value="Atypical_DUSP_subfamB"/>
</dbReference>
<dbReference type="InterPro" id="IPR000340">
    <property type="entry name" value="Dual-sp_phosphatase_cat-dom"/>
</dbReference>
<dbReference type="InterPro" id="IPR029021">
    <property type="entry name" value="Prot-tyrosine_phosphatase-like"/>
</dbReference>
<dbReference type="InterPro" id="IPR016130">
    <property type="entry name" value="Tyr_Pase_AS"/>
</dbReference>
<dbReference type="InterPro" id="IPR000387">
    <property type="entry name" value="Tyr_Pase_dom"/>
</dbReference>
<dbReference type="InterPro" id="IPR020422">
    <property type="entry name" value="TYR_PHOSPHATASE_DUAL_dom"/>
</dbReference>
<dbReference type="PANTHER" id="PTHR46495:SF2">
    <property type="entry name" value="DUAL SPECIFICITY PROTEIN PHOSPHATASE 18"/>
    <property type="match status" value="1"/>
</dbReference>
<dbReference type="PANTHER" id="PTHR46495">
    <property type="entry name" value="DUAL SPECIFICITY PROTEIN PHOSPHATASE 21"/>
    <property type="match status" value="1"/>
</dbReference>
<dbReference type="Pfam" id="PF00782">
    <property type="entry name" value="DSPc"/>
    <property type="match status" value="1"/>
</dbReference>
<dbReference type="PRINTS" id="PR01908">
    <property type="entry name" value="ADSPHPHTASE"/>
</dbReference>
<dbReference type="PRINTS" id="PR01910">
    <property type="entry name" value="ADSPHPHTASEB"/>
</dbReference>
<dbReference type="SMART" id="SM00195">
    <property type="entry name" value="DSPc"/>
    <property type="match status" value="1"/>
</dbReference>
<dbReference type="SUPFAM" id="SSF52799">
    <property type="entry name" value="(Phosphotyrosine protein) phosphatases II"/>
    <property type="match status" value="1"/>
</dbReference>
<dbReference type="PROSITE" id="PS00383">
    <property type="entry name" value="TYR_PHOSPHATASE_1"/>
    <property type="match status" value="1"/>
</dbReference>
<dbReference type="PROSITE" id="PS50056">
    <property type="entry name" value="TYR_PHOSPHATASE_2"/>
    <property type="match status" value="1"/>
</dbReference>
<dbReference type="PROSITE" id="PS50054">
    <property type="entry name" value="TYR_PHOSPHATASE_DUAL"/>
    <property type="match status" value="1"/>
</dbReference>
<sequence length="204" mass="22754">MTSPWSACPVQFPQPSISGLSQITKSLFISNGAAANDKLLLSSNQITTVINVSVEVANTFYEDIQYVQVPVVDAPIARLSDFFDPIADHIHSVEMKQGRTLLHCAAGVSRSAALCLAYLMKYHVMSLLDAHAWTKSRRPIIRPNSGFWEQLIHYEFQLFGKNTMQMVNSPMGLIPDIYEKETRMMIPLSTPDGAFHKGKEKALL</sequence>
<name>DUS18_RAT</name>
<proteinExistence type="evidence at transcript level"/>
<evidence type="ECO:0000250" key="1"/>
<evidence type="ECO:0000250" key="2">
    <source>
        <dbReference type="UniProtKB" id="Q8NEJ0"/>
    </source>
</evidence>
<evidence type="ECO:0000250" key="3">
    <source>
        <dbReference type="UniProtKB" id="Q8VE01"/>
    </source>
</evidence>
<evidence type="ECO:0000255" key="4">
    <source>
        <dbReference type="PROSITE-ProRule" id="PRU00160"/>
    </source>
</evidence>
<evidence type="ECO:0000255" key="5">
    <source>
        <dbReference type="PROSITE-ProRule" id="PRU10044"/>
    </source>
</evidence>
<evidence type="ECO:0000269" key="6">
    <source>
    </source>
</evidence>
<evidence type="ECO:0000305" key="7"/>
<gene>
    <name type="primary">Dusp18</name>
</gene>